<proteinExistence type="inferred from homology"/>
<keyword id="KW-0150">Chloroplast</keyword>
<keyword id="KW-0934">Plastid</keyword>
<keyword id="KW-0687">Ribonucleoprotein</keyword>
<keyword id="KW-0689">Ribosomal protein</keyword>
<organism>
    <name type="scientific">Emiliania huxleyi</name>
    <name type="common">Coccolithophore</name>
    <name type="synonym">Pontosphaera huxleyi</name>
    <dbReference type="NCBI Taxonomy" id="2903"/>
    <lineage>
        <taxon>Eukaryota</taxon>
        <taxon>Haptista</taxon>
        <taxon>Haptophyta</taxon>
        <taxon>Prymnesiophyceae</taxon>
        <taxon>Isochrysidales</taxon>
        <taxon>Noelaerhabdaceae</taxon>
        <taxon>Emiliania</taxon>
    </lineage>
</organism>
<evidence type="ECO:0000305" key="1"/>
<name>RR9_EMIHU</name>
<feature type="chain" id="PRO_0000277077" description="Small ribosomal subunit protein uS9c">
    <location>
        <begin position="1"/>
        <end position="131"/>
    </location>
</feature>
<sequence>MSTISYTAVGRRKEATAKVKLQPGTGIITVNKKPGETYFNYNSEYLSTLRGPLLALGLENDYDLHITAKGGGIKGQTDAVKLGLARAICTMSSEKRESLKPHGYLTRDYRAKERKKYGLRKARKAPQFSKR</sequence>
<reference key="1">
    <citation type="journal article" date="2005" name="DNA Res.">
        <title>The complete plastid genome sequence of the haptophyte Emiliania huxleyi: a comparison to other plastid genomes.</title>
        <authorList>
            <person name="Sanchez-Puerta M.V."/>
            <person name="Bachvaroff T.R."/>
            <person name="Delwiche C.F."/>
        </authorList>
    </citation>
    <scope>NUCLEOTIDE SEQUENCE [LARGE SCALE GENOMIC DNA]</scope>
    <source>
        <strain>CCMP373 / CSIRO-CS-57 / BT6</strain>
    </source>
</reference>
<gene>
    <name type="primary">rps9</name>
</gene>
<geneLocation type="chloroplast"/>
<accession>Q4G346</accession>
<protein>
    <recommendedName>
        <fullName evidence="1">Small ribosomal subunit protein uS9c</fullName>
    </recommendedName>
    <alternativeName>
        <fullName>30S ribosomal protein S9, chloroplastic</fullName>
    </alternativeName>
</protein>
<dbReference type="EMBL" id="AY741371">
    <property type="protein sequence ID" value="AAX13920.1"/>
    <property type="molecule type" value="Genomic_DNA"/>
</dbReference>
<dbReference type="RefSeq" id="YP_277421.1">
    <property type="nucleotide sequence ID" value="NC_007288.1"/>
</dbReference>
<dbReference type="SMR" id="Q4G346"/>
<dbReference type="STRING" id="2903.Q4G346"/>
<dbReference type="GeneID" id="3562524"/>
<dbReference type="GO" id="GO:0009507">
    <property type="term" value="C:chloroplast"/>
    <property type="evidence" value="ECO:0007669"/>
    <property type="project" value="UniProtKB-SubCell"/>
</dbReference>
<dbReference type="GO" id="GO:0022627">
    <property type="term" value="C:cytosolic small ribosomal subunit"/>
    <property type="evidence" value="ECO:0007669"/>
    <property type="project" value="TreeGrafter"/>
</dbReference>
<dbReference type="GO" id="GO:0003723">
    <property type="term" value="F:RNA binding"/>
    <property type="evidence" value="ECO:0007669"/>
    <property type="project" value="TreeGrafter"/>
</dbReference>
<dbReference type="GO" id="GO:0003735">
    <property type="term" value="F:structural constituent of ribosome"/>
    <property type="evidence" value="ECO:0007669"/>
    <property type="project" value="InterPro"/>
</dbReference>
<dbReference type="GO" id="GO:0006412">
    <property type="term" value="P:translation"/>
    <property type="evidence" value="ECO:0007669"/>
    <property type="project" value="UniProtKB-UniRule"/>
</dbReference>
<dbReference type="FunFam" id="3.30.230.10:FF:000001">
    <property type="entry name" value="30S ribosomal protein S9"/>
    <property type="match status" value="1"/>
</dbReference>
<dbReference type="Gene3D" id="3.30.230.10">
    <property type="match status" value="1"/>
</dbReference>
<dbReference type="HAMAP" id="MF_00532_B">
    <property type="entry name" value="Ribosomal_uS9_B"/>
    <property type="match status" value="1"/>
</dbReference>
<dbReference type="InterPro" id="IPR020568">
    <property type="entry name" value="Ribosomal_Su5_D2-typ_SF"/>
</dbReference>
<dbReference type="InterPro" id="IPR000754">
    <property type="entry name" value="Ribosomal_uS9"/>
</dbReference>
<dbReference type="InterPro" id="IPR023035">
    <property type="entry name" value="Ribosomal_uS9_bac/plastid"/>
</dbReference>
<dbReference type="InterPro" id="IPR020574">
    <property type="entry name" value="Ribosomal_uS9_CS"/>
</dbReference>
<dbReference type="InterPro" id="IPR014721">
    <property type="entry name" value="Ribsml_uS5_D2-typ_fold_subgr"/>
</dbReference>
<dbReference type="NCBIfam" id="NF001099">
    <property type="entry name" value="PRK00132.1"/>
    <property type="match status" value="1"/>
</dbReference>
<dbReference type="PANTHER" id="PTHR21569">
    <property type="entry name" value="RIBOSOMAL PROTEIN S9"/>
    <property type="match status" value="1"/>
</dbReference>
<dbReference type="PANTHER" id="PTHR21569:SF1">
    <property type="entry name" value="SMALL RIBOSOMAL SUBUNIT PROTEIN US9M"/>
    <property type="match status" value="1"/>
</dbReference>
<dbReference type="Pfam" id="PF00380">
    <property type="entry name" value="Ribosomal_S9"/>
    <property type="match status" value="1"/>
</dbReference>
<dbReference type="SUPFAM" id="SSF54211">
    <property type="entry name" value="Ribosomal protein S5 domain 2-like"/>
    <property type="match status" value="1"/>
</dbReference>
<dbReference type="PROSITE" id="PS00360">
    <property type="entry name" value="RIBOSOMAL_S9"/>
    <property type="match status" value="1"/>
</dbReference>
<comment type="subcellular location">
    <subcellularLocation>
        <location>Plastid</location>
        <location>Chloroplast</location>
    </subcellularLocation>
</comment>
<comment type="similarity">
    <text evidence="1">Belongs to the universal ribosomal protein uS9 family.</text>
</comment>